<keyword id="KW-0963">Cytoplasm</keyword>
<keyword id="KW-0539">Nucleus</keyword>
<keyword id="KW-0647">Proteasome</keyword>
<keyword id="KW-1185">Reference proteome</keyword>
<evidence type="ECO:0000250" key="1"/>
<evidence type="ECO:0000255" key="2">
    <source>
        <dbReference type="PROSITE-ProRule" id="PRU00808"/>
    </source>
</evidence>
<evidence type="ECO:0000269" key="3">
    <source>
    </source>
</evidence>
<evidence type="ECO:0000269" key="4">
    <source>
    </source>
</evidence>
<evidence type="ECO:0000269" key="5">
    <source>
    </source>
</evidence>
<evidence type="ECO:0000269" key="6">
    <source>
    </source>
</evidence>
<evidence type="ECO:0000305" key="7"/>
<feature type="chain" id="PRO_0000124135" description="Proteasome subunit alpha type-6-A">
    <location>
        <begin position="1"/>
        <end position="246"/>
    </location>
</feature>
<feature type="sequence conflict" description="In Ref. 4; AAM12968/AAM47883." evidence="7" ref="4">
    <original>K</original>
    <variation>E</variation>
    <location>
        <position position="55"/>
    </location>
</feature>
<feature type="sequence conflict" description="In Ref. 1; AAC32054." evidence="7" ref="1">
    <original>KK</original>
    <variation>EE</variation>
    <location>
        <begin position="181"/>
        <end position="182"/>
    </location>
</feature>
<feature type="sequence conflict" description="In Ref. 1; AAC32054." evidence="7" ref="1">
    <original>E</original>
    <variation>G</variation>
    <location>
        <position position="185"/>
    </location>
</feature>
<protein>
    <recommendedName>
        <fullName>Proteasome subunit alpha type-6-A</fullName>
    </recommendedName>
    <alternativeName>
        <fullName>20S proteasome subunit alpha A-1</fullName>
    </alternativeName>
    <alternativeName>
        <fullName>Proteasome component 1</fullName>
    </alternativeName>
    <alternativeName>
        <fullName>Proteasome subunit alpha type-1</fullName>
    </alternativeName>
</protein>
<reference key="1">
    <citation type="journal article" date="1998" name="Genetics">
        <title>Molecular organization of the 20S proteasome gene family from Arabidopsis thaliana.</title>
        <authorList>
            <person name="Fu H."/>
            <person name="Doelling J.H."/>
            <person name="Arendt C.S."/>
            <person name="Hochstrasser M."/>
            <person name="Vierstra R.D."/>
        </authorList>
    </citation>
    <scope>NUCLEOTIDE SEQUENCE [MRNA]</scope>
    <scope>TISSUE SPECIFICITY</scope>
    <scope>GENE FAMILY</scope>
    <scope>NOMENCLATURE</scope>
    <source>
        <strain>cv. Columbia</strain>
    </source>
</reference>
<reference key="2">
    <citation type="journal article" date="2000" name="DNA Res.">
        <title>Structural analysis of Arabidopsis thaliana chromosome 5. X. Sequence features of the regions of 3,076,755 bp covered by sixty P1 and TAC clones.</title>
        <authorList>
            <person name="Sato S."/>
            <person name="Nakamura Y."/>
            <person name="Kaneko T."/>
            <person name="Katoh T."/>
            <person name="Asamizu E."/>
            <person name="Kotani H."/>
            <person name="Tabata S."/>
        </authorList>
    </citation>
    <scope>NUCLEOTIDE SEQUENCE [LARGE SCALE GENOMIC DNA]</scope>
    <source>
        <strain>cv. Columbia</strain>
    </source>
</reference>
<reference key="3">
    <citation type="journal article" date="2017" name="Plant J.">
        <title>Araport11: a complete reannotation of the Arabidopsis thaliana reference genome.</title>
        <authorList>
            <person name="Cheng C.Y."/>
            <person name="Krishnakumar V."/>
            <person name="Chan A.P."/>
            <person name="Thibaud-Nissen F."/>
            <person name="Schobel S."/>
            <person name="Town C.D."/>
        </authorList>
    </citation>
    <scope>GENOME REANNOTATION</scope>
    <source>
        <strain>cv. Columbia</strain>
    </source>
</reference>
<reference key="4">
    <citation type="journal article" date="2003" name="Science">
        <title>Empirical analysis of transcriptional activity in the Arabidopsis genome.</title>
        <authorList>
            <person name="Yamada K."/>
            <person name="Lim J."/>
            <person name="Dale J.M."/>
            <person name="Chen H."/>
            <person name="Shinn P."/>
            <person name="Palm C.J."/>
            <person name="Southwick A.M."/>
            <person name="Wu H.C."/>
            <person name="Kim C.J."/>
            <person name="Nguyen M."/>
            <person name="Pham P.K."/>
            <person name="Cheuk R.F."/>
            <person name="Karlin-Newmann G."/>
            <person name="Liu S.X."/>
            <person name="Lam B."/>
            <person name="Sakano H."/>
            <person name="Wu T."/>
            <person name="Yu G."/>
            <person name="Miranda M."/>
            <person name="Quach H.L."/>
            <person name="Tripp M."/>
            <person name="Chang C.H."/>
            <person name="Lee J.M."/>
            <person name="Toriumi M.J."/>
            <person name="Chan M.M."/>
            <person name="Tang C.C."/>
            <person name="Onodera C.S."/>
            <person name="Deng J.M."/>
            <person name="Akiyama K."/>
            <person name="Ansari Y."/>
            <person name="Arakawa T."/>
            <person name="Banh J."/>
            <person name="Banno F."/>
            <person name="Bowser L."/>
            <person name="Brooks S.Y."/>
            <person name="Carninci P."/>
            <person name="Chao Q."/>
            <person name="Choy N."/>
            <person name="Enju A."/>
            <person name="Goldsmith A.D."/>
            <person name="Gurjal M."/>
            <person name="Hansen N.F."/>
            <person name="Hayashizaki Y."/>
            <person name="Johnson-Hopson C."/>
            <person name="Hsuan V.W."/>
            <person name="Iida K."/>
            <person name="Karnes M."/>
            <person name="Khan S."/>
            <person name="Koesema E."/>
            <person name="Ishida J."/>
            <person name="Jiang P.X."/>
            <person name="Jones T."/>
            <person name="Kawai J."/>
            <person name="Kamiya A."/>
            <person name="Meyers C."/>
            <person name="Nakajima M."/>
            <person name="Narusaka M."/>
            <person name="Seki M."/>
            <person name="Sakurai T."/>
            <person name="Satou M."/>
            <person name="Tamse R."/>
            <person name="Vaysberg M."/>
            <person name="Wallender E.K."/>
            <person name="Wong C."/>
            <person name="Yamamura Y."/>
            <person name="Yuan S."/>
            <person name="Shinozaki K."/>
            <person name="Davis R.W."/>
            <person name="Theologis A."/>
            <person name="Ecker J.R."/>
        </authorList>
    </citation>
    <scope>NUCLEOTIDE SEQUENCE [LARGE SCALE MRNA]</scope>
    <source>
        <strain>cv. Columbia</strain>
    </source>
</reference>
<reference key="5">
    <citation type="submission" date="2006-07" db="EMBL/GenBank/DDBJ databases">
        <title>Large-scale analysis of RIKEN Arabidopsis full-length (RAFL) cDNAs.</title>
        <authorList>
            <person name="Totoki Y."/>
            <person name="Seki M."/>
            <person name="Ishida J."/>
            <person name="Nakajima M."/>
            <person name="Enju A."/>
            <person name="Kamiya A."/>
            <person name="Narusaka M."/>
            <person name="Shin-i T."/>
            <person name="Nakagawa M."/>
            <person name="Sakamoto N."/>
            <person name="Oishi K."/>
            <person name="Kohara Y."/>
            <person name="Kobayashi M."/>
            <person name="Toyoda A."/>
            <person name="Sakaki Y."/>
            <person name="Sakurai T."/>
            <person name="Iida K."/>
            <person name="Akiyama K."/>
            <person name="Satou M."/>
            <person name="Toyoda T."/>
            <person name="Konagaya A."/>
            <person name="Carninci P."/>
            <person name="Kawai J."/>
            <person name="Hayashizaki Y."/>
            <person name="Shinozaki K."/>
        </authorList>
    </citation>
    <scope>NUCLEOTIDE SEQUENCE [LARGE SCALE MRNA]</scope>
    <source>
        <strain>cv. Columbia</strain>
    </source>
</reference>
<reference key="6">
    <citation type="journal article" date="1997" name="FEBS Lett.">
        <title>The 20S proteasome gene family in Arabidopsis thaliana.</title>
        <authorList>
            <person name="Parmentier Y."/>
            <person name="Bouchez D."/>
            <person name="Fleck J."/>
            <person name="Genschik P."/>
        </authorList>
    </citation>
    <scope>NUCLEOTIDE SEQUENCE [MRNA] OF 2-246</scope>
    <source>
        <strain>cv. Columbia</strain>
    </source>
</reference>
<reference key="7">
    <citation type="journal article" date="1999" name="Mol. Biol. Rep.">
        <title>Structure and functional analyses of the 26S proteasome subunits from plants.</title>
        <authorList>
            <person name="Fu H."/>
            <person name="Girod P.-A."/>
            <person name="Doelling J.H."/>
            <person name="van Nocker S."/>
            <person name="Hochstrasser M."/>
            <person name="Finley D."/>
            <person name="Vierstra R.D."/>
        </authorList>
    </citation>
    <scope>SUBUNIT</scope>
</reference>
<reference key="8">
    <citation type="journal article" date="2004" name="J. Biol. Chem.">
        <title>Purification of the Arabidopsis 26 S proteasome: biochemical and molecular analyses revealed the presence of multiple isoforms.</title>
        <authorList>
            <person name="Yang P."/>
            <person name="Fu H."/>
            <person name="Walker J."/>
            <person name="Papa C.M."/>
            <person name="Smalle J."/>
            <person name="Ju Y.-M."/>
            <person name="Vierstra R.D."/>
        </authorList>
    </citation>
    <scope>SUBUNIT</scope>
    <scope>IDENTIFICATION BY MASS SPECTROMETRY</scope>
</reference>
<reference key="9">
    <citation type="journal article" date="2010" name="J. Biol. Chem.">
        <title>Affinity purification of the Arabidopsis 26 S proteasome reveals a diverse array of plant proteolytic complexes.</title>
        <authorList>
            <person name="Book A.J."/>
            <person name="Gladman N.P."/>
            <person name="Lee S.S."/>
            <person name="Scalf M."/>
            <person name="Smith L.M."/>
            <person name="Vierstra R.D."/>
        </authorList>
    </citation>
    <scope>IDENTIFICATION BY MASS SPECTROMETRY</scope>
    <scope>CHARACTERIZATION OF THE 26S PROTEASOME COMPLEX</scope>
    <scope>SUBUNIT</scope>
</reference>
<sequence>MSRGSGAGYDRHITIFSPEGRLFQVEYAFKAVKTAGITSIGVRGKDSVCVVTQKKVPDKLLDQSSVTHLFPITKYIGLVATGITADARSLVQQARNQAAEFRFTYGYEMPVDILAKWIADKSQVYTQHAYMRPLGVVAMVMGVDEENGPLLYKCDPAGHFYGHKATSAGMKEQEAVNFLEKKMKENPSFTFDETVQTAISALQSVLQEDFKATEIEVGVVRAENPEFRALTTEEIEEHLTAISERD</sequence>
<accession>O81146</accession>
<accession>O23713</accession>
<accession>Q0WR56</accession>
<accession>Q8RWN8</accession>
<comment type="function">
    <text>The proteasome is a multicatalytic proteinase complex which is characterized by its ability to cleave peptides with Arg, Phe, Tyr, Leu, and Glu adjacent to the leaving group at neutral or slightly basic pH. The proteasome has an ATP-dependent proteolytic activity.</text>
</comment>
<comment type="subunit">
    <text evidence="3 4 5">Component of the 20S core complex of the 26S proteasome. The 26S proteasome is composed of a core protease (CP), known as the 20S proteasome, capped at one or both ends by the 19S regulatory particle (RP/PA700). The 20S proteasome core is composed of 28 subunits that are arranged in four stacked rings, resulting in a barrel-shaped structure. The two end rings are each formed by seven alpha subunits, and the two central rings are each formed by seven beta subunits. The catalytic chamber with the active sites is on the inside of the barrel.</text>
</comment>
<comment type="subcellular location">
    <subcellularLocation>
        <location evidence="1">Cytoplasm</location>
    </subcellularLocation>
    <subcellularLocation>
        <location evidence="1">Nucleus</location>
    </subcellularLocation>
</comment>
<comment type="tissue specificity">
    <text evidence="6">Ubiquitous low levels, higher expression in siliques and flowers.</text>
</comment>
<comment type="similarity">
    <text evidence="2">Belongs to the peptidase T1A family.</text>
</comment>
<gene>
    <name type="primary">PAA1</name>
    <name type="synonym">PRC1</name>
    <name type="ordered locus">At5g35590</name>
    <name type="ORF">K2K18.4</name>
</gene>
<proteinExistence type="evidence at protein level"/>
<name>PSA6A_ARATH</name>
<dbReference type="EMBL" id="AF043518">
    <property type="protein sequence ID" value="AAC32054.1"/>
    <property type="molecule type" value="mRNA"/>
</dbReference>
<dbReference type="EMBL" id="AB023031">
    <property type="protein sequence ID" value="BAB09993.1"/>
    <property type="molecule type" value="Genomic_DNA"/>
</dbReference>
<dbReference type="EMBL" id="CP002688">
    <property type="protein sequence ID" value="AED93984.1"/>
    <property type="molecule type" value="Genomic_DNA"/>
</dbReference>
<dbReference type="EMBL" id="AY092969">
    <property type="protein sequence ID" value="AAM12968.1"/>
    <property type="molecule type" value="mRNA"/>
</dbReference>
<dbReference type="EMBL" id="AY114564">
    <property type="protein sequence ID" value="AAM47883.1"/>
    <property type="molecule type" value="mRNA"/>
</dbReference>
<dbReference type="EMBL" id="AK228466">
    <property type="protein sequence ID" value="BAF00393.1"/>
    <property type="molecule type" value="mRNA"/>
</dbReference>
<dbReference type="EMBL" id="Y13691">
    <property type="protein sequence ID" value="CAA74025.1"/>
    <property type="molecule type" value="mRNA"/>
</dbReference>
<dbReference type="RefSeq" id="NP_198409.1">
    <property type="nucleotide sequence ID" value="NM_122950.4"/>
</dbReference>
<dbReference type="SMR" id="O81146"/>
<dbReference type="BioGRID" id="18777">
    <property type="interactions" value="77"/>
</dbReference>
<dbReference type="FunCoup" id="O81146">
    <property type="interactions" value="4498"/>
</dbReference>
<dbReference type="IntAct" id="O81146">
    <property type="interactions" value="2"/>
</dbReference>
<dbReference type="STRING" id="3702.O81146"/>
<dbReference type="MEROPS" id="T01.971"/>
<dbReference type="iPTMnet" id="O81146"/>
<dbReference type="PaxDb" id="3702-AT5G35590.1"/>
<dbReference type="ProteomicsDB" id="226305"/>
<dbReference type="EnsemblPlants" id="AT5G35590.1">
    <property type="protein sequence ID" value="AT5G35590.1"/>
    <property type="gene ID" value="AT5G35590"/>
</dbReference>
<dbReference type="GeneID" id="833524"/>
<dbReference type="Gramene" id="AT5G35590.1">
    <property type="protein sequence ID" value="AT5G35590.1"/>
    <property type="gene ID" value="AT5G35590"/>
</dbReference>
<dbReference type="KEGG" id="ath:AT5G35590"/>
<dbReference type="Araport" id="AT5G35590"/>
<dbReference type="TAIR" id="AT5G35590">
    <property type="gene designation" value="PAA1"/>
</dbReference>
<dbReference type="eggNOG" id="KOG0182">
    <property type="taxonomic scope" value="Eukaryota"/>
</dbReference>
<dbReference type="HOGENOM" id="CLU_035750_4_1_1"/>
<dbReference type="InParanoid" id="O81146"/>
<dbReference type="OMA" id="WTYEQII"/>
<dbReference type="OrthoDB" id="939142at2759"/>
<dbReference type="PhylomeDB" id="O81146"/>
<dbReference type="CD-CODE" id="4299E36E">
    <property type="entry name" value="Nucleolus"/>
</dbReference>
<dbReference type="PRO" id="PR:O81146"/>
<dbReference type="Proteomes" id="UP000006548">
    <property type="component" value="Chromosome 5"/>
</dbReference>
<dbReference type="ExpressionAtlas" id="O81146">
    <property type="expression patterns" value="baseline and differential"/>
</dbReference>
<dbReference type="GO" id="GO:0005829">
    <property type="term" value="C:cytosol"/>
    <property type="evidence" value="ECO:0007005"/>
    <property type="project" value="TAIR"/>
</dbReference>
<dbReference type="GO" id="GO:0005634">
    <property type="term" value="C:nucleus"/>
    <property type="evidence" value="ECO:0007669"/>
    <property type="project" value="UniProtKB-SubCell"/>
</dbReference>
<dbReference type="GO" id="GO:0000325">
    <property type="term" value="C:plant-type vacuole"/>
    <property type="evidence" value="ECO:0007005"/>
    <property type="project" value="TAIR"/>
</dbReference>
<dbReference type="GO" id="GO:0009536">
    <property type="term" value="C:plastid"/>
    <property type="evidence" value="ECO:0007005"/>
    <property type="project" value="TAIR"/>
</dbReference>
<dbReference type="GO" id="GO:0000502">
    <property type="term" value="C:proteasome complex"/>
    <property type="evidence" value="ECO:0000314"/>
    <property type="project" value="TAIR"/>
</dbReference>
<dbReference type="GO" id="GO:0019773">
    <property type="term" value="C:proteasome core complex, alpha-subunit complex"/>
    <property type="evidence" value="ECO:0000250"/>
    <property type="project" value="UniProtKB"/>
</dbReference>
<dbReference type="GO" id="GO:0010043">
    <property type="term" value="P:response to zinc ion"/>
    <property type="evidence" value="ECO:0000270"/>
    <property type="project" value="TAIR"/>
</dbReference>
<dbReference type="GO" id="GO:0006511">
    <property type="term" value="P:ubiquitin-dependent protein catabolic process"/>
    <property type="evidence" value="ECO:0007669"/>
    <property type="project" value="InterPro"/>
</dbReference>
<dbReference type="CDD" id="cd03754">
    <property type="entry name" value="proteasome_alpha_type_6"/>
    <property type="match status" value="1"/>
</dbReference>
<dbReference type="FunFam" id="3.60.20.10:FF:000036">
    <property type="entry name" value="Proteasome subunit alpha type"/>
    <property type="match status" value="1"/>
</dbReference>
<dbReference type="Gene3D" id="3.60.20.10">
    <property type="entry name" value="Glutamine Phosphoribosylpyrophosphate, subunit 1, domain 1"/>
    <property type="match status" value="1"/>
</dbReference>
<dbReference type="InterPro" id="IPR029055">
    <property type="entry name" value="Ntn_hydrolases_N"/>
</dbReference>
<dbReference type="InterPro" id="IPR050115">
    <property type="entry name" value="Proteasome_alpha"/>
</dbReference>
<dbReference type="InterPro" id="IPR023332">
    <property type="entry name" value="Proteasome_alpha-type"/>
</dbReference>
<dbReference type="InterPro" id="IPR000426">
    <property type="entry name" value="Proteasome_asu_N"/>
</dbReference>
<dbReference type="InterPro" id="IPR001353">
    <property type="entry name" value="Proteasome_sua/b"/>
</dbReference>
<dbReference type="InterPro" id="IPR034642">
    <property type="entry name" value="Proteasome_subunit_alpha6"/>
</dbReference>
<dbReference type="NCBIfam" id="NF003075">
    <property type="entry name" value="PRK03996.1"/>
    <property type="match status" value="1"/>
</dbReference>
<dbReference type="PANTHER" id="PTHR11599">
    <property type="entry name" value="PROTEASOME SUBUNIT ALPHA/BETA"/>
    <property type="match status" value="1"/>
</dbReference>
<dbReference type="Pfam" id="PF00227">
    <property type="entry name" value="Proteasome"/>
    <property type="match status" value="1"/>
</dbReference>
<dbReference type="Pfam" id="PF10584">
    <property type="entry name" value="Proteasome_A_N"/>
    <property type="match status" value="1"/>
</dbReference>
<dbReference type="SMART" id="SM00948">
    <property type="entry name" value="Proteasome_A_N"/>
    <property type="match status" value="1"/>
</dbReference>
<dbReference type="SUPFAM" id="SSF56235">
    <property type="entry name" value="N-terminal nucleophile aminohydrolases (Ntn hydrolases)"/>
    <property type="match status" value="1"/>
</dbReference>
<dbReference type="PROSITE" id="PS00388">
    <property type="entry name" value="PROTEASOME_ALPHA_1"/>
    <property type="match status" value="1"/>
</dbReference>
<dbReference type="PROSITE" id="PS51475">
    <property type="entry name" value="PROTEASOME_ALPHA_2"/>
    <property type="match status" value="1"/>
</dbReference>
<organism>
    <name type="scientific">Arabidopsis thaliana</name>
    <name type="common">Mouse-ear cress</name>
    <dbReference type="NCBI Taxonomy" id="3702"/>
    <lineage>
        <taxon>Eukaryota</taxon>
        <taxon>Viridiplantae</taxon>
        <taxon>Streptophyta</taxon>
        <taxon>Embryophyta</taxon>
        <taxon>Tracheophyta</taxon>
        <taxon>Spermatophyta</taxon>
        <taxon>Magnoliopsida</taxon>
        <taxon>eudicotyledons</taxon>
        <taxon>Gunneridae</taxon>
        <taxon>Pentapetalae</taxon>
        <taxon>rosids</taxon>
        <taxon>malvids</taxon>
        <taxon>Brassicales</taxon>
        <taxon>Brassicaceae</taxon>
        <taxon>Camelineae</taxon>
        <taxon>Arabidopsis</taxon>
    </lineage>
</organism>